<organism>
    <name type="scientific">Homo sapiens</name>
    <name type="common">Human</name>
    <dbReference type="NCBI Taxonomy" id="9606"/>
    <lineage>
        <taxon>Eukaryota</taxon>
        <taxon>Metazoa</taxon>
        <taxon>Chordata</taxon>
        <taxon>Craniata</taxon>
        <taxon>Vertebrata</taxon>
        <taxon>Euteleostomi</taxon>
        <taxon>Mammalia</taxon>
        <taxon>Eutheria</taxon>
        <taxon>Euarchontoglires</taxon>
        <taxon>Primates</taxon>
        <taxon>Haplorrhini</taxon>
        <taxon>Catarrhini</taxon>
        <taxon>Hominidae</taxon>
        <taxon>Homo</taxon>
    </lineage>
</organism>
<reference key="1">
    <citation type="journal article" date="2004" name="Nat. Genet.">
        <title>Complete sequencing and characterization of 21,243 full-length human cDNAs.</title>
        <authorList>
            <person name="Ota T."/>
            <person name="Suzuki Y."/>
            <person name="Nishikawa T."/>
            <person name="Otsuki T."/>
            <person name="Sugiyama T."/>
            <person name="Irie R."/>
            <person name="Wakamatsu A."/>
            <person name="Hayashi K."/>
            <person name="Sato H."/>
            <person name="Nagai K."/>
            <person name="Kimura K."/>
            <person name="Makita H."/>
            <person name="Sekine M."/>
            <person name="Obayashi M."/>
            <person name="Nishi T."/>
            <person name="Shibahara T."/>
            <person name="Tanaka T."/>
            <person name="Ishii S."/>
            <person name="Yamamoto J."/>
            <person name="Saito K."/>
            <person name="Kawai Y."/>
            <person name="Isono Y."/>
            <person name="Nakamura Y."/>
            <person name="Nagahari K."/>
            <person name="Murakami K."/>
            <person name="Yasuda T."/>
            <person name="Iwayanagi T."/>
            <person name="Wagatsuma M."/>
            <person name="Shiratori A."/>
            <person name="Sudo H."/>
            <person name="Hosoiri T."/>
            <person name="Kaku Y."/>
            <person name="Kodaira H."/>
            <person name="Kondo H."/>
            <person name="Sugawara M."/>
            <person name="Takahashi M."/>
            <person name="Kanda K."/>
            <person name="Yokoi T."/>
            <person name="Furuya T."/>
            <person name="Kikkawa E."/>
            <person name="Omura Y."/>
            <person name="Abe K."/>
            <person name="Kamihara K."/>
            <person name="Katsuta N."/>
            <person name="Sato K."/>
            <person name="Tanikawa M."/>
            <person name="Yamazaki M."/>
            <person name="Ninomiya K."/>
            <person name="Ishibashi T."/>
            <person name="Yamashita H."/>
            <person name="Murakawa K."/>
            <person name="Fujimori K."/>
            <person name="Tanai H."/>
            <person name="Kimata M."/>
            <person name="Watanabe M."/>
            <person name="Hiraoka S."/>
            <person name="Chiba Y."/>
            <person name="Ishida S."/>
            <person name="Ono Y."/>
            <person name="Takiguchi S."/>
            <person name="Watanabe S."/>
            <person name="Yosida M."/>
            <person name="Hotuta T."/>
            <person name="Kusano J."/>
            <person name="Kanehori K."/>
            <person name="Takahashi-Fujii A."/>
            <person name="Hara H."/>
            <person name="Tanase T.-O."/>
            <person name="Nomura Y."/>
            <person name="Togiya S."/>
            <person name="Komai F."/>
            <person name="Hara R."/>
            <person name="Takeuchi K."/>
            <person name="Arita M."/>
            <person name="Imose N."/>
            <person name="Musashino K."/>
            <person name="Yuuki H."/>
            <person name="Oshima A."/>
            <person name="Sasaki N."/>
            <person name="Aotsuka S."/>
            <person name="Yoshikawa Y."/>
            <person name="Matsunawa H."/>
            <person name="Ichihara T."/>
            <person name="Shiohata N."/>
            <person name="Sano S."/>
            <person name="Moriya S."/>
            <person name="Momiyama H."/>
            <person name="Satoh N."/>
            <person name="Takami S."/>
            <person name="Terashima Y."/>
            <person name="Suzuki O."/>
            <person name="Nakagawa S."/>
            <person name="Senoh A."/>
            <person name="Mizoguchi H."/>
            <person name="Goto Y."/>
            <person name="Shimizu F."/>
            <person name="Wakebe H."/>
            <person name="Hishigaki H."/>
            <person name="Watanabe T."/>
            <person name="Sugiyama A."/>
            <person name="Takemoto M."/>
            <person name="Kawakami B."/>
            <person name="Yamazaki M."/>
            <person name="Watanabe K."/>
            <person name="Kumagai A."/>
            <person name="Itakura S."/>
            <person name="Fukuzumi Y."/>
            <person name="Fujimori Y."/>
            <person name="Komiyama M."/>
            <person name="Tashiro H."/>
            <person name="Tanigami A."/>
            <person name="Fujiwara T."/>
            <person name="Ono T."/>
            <person name="Yamada K."/>
            <person name="Fujii Y."/>
            <person name="Ozaki K."/>
            <person name="Hirao M."/>
            <person name="Ohmori Y."/>
            <person name="Kawabata A."/>
            <person name="Hikiji T."/>
            <person name="Kobatake N."/>
            <person name="Inagaki H."/>
            <person name="Ikema Y."/>
            <person name="Okamoto S."/>
            <person name="Okitani R."/>
            <person name="Kawakami T."/>
            <person name="Noguchi S."/>
            <person name="Itoh T."/>
            <person name="Shigeta K."/>
            <person name="Senba T."/>
            <person name="Matsumura K."/>
            <person name="Nakajima Y."/>
            <person name="Mizuno T."/>
            <person name="Morinaga M."/>
            <person name="Sasaki M."/>
            <person name="Togashi T."/>
            <person name="Oyama M."/>
            <person name="Hata H."/>
            <person name="Watanabe M."/>
            <person name="Komatsu T."/>
            <person name="Mizushima-Sugano J."/>
            <person name="Satoh T."/>
            <person name="Shirai Y."/>
            <person name="Takahashi Y."/>
            <person name="Nakagawa K."/>
            <person name="Okumura K."/>
            <person name="Nagase T."/>
            <person name="Nomura N."/>
            <person name="Kikuchi H."/>
            <person name="Masuho Y."/>
            <person name="Yamashita R."/>
            <person name="Nakai K."/>
            <person name="Yada T."/>
            <person name="Nakamura Y."/>
            <person name="Ohara O."/>
            <person name="Isogai T."/>
            <person name="Sugano S."/>
        </authorList>
    </citation>
    <scope>NUCLEOTIDE SEQUENCE [LARGE SCALE MRNA]</scope>
    <source>
        <tissue>Testis</tissue>
    </source>
</reference>
<reference key="2">
    <citation type="journal article" date="2007" name="BMC Genomics">
        <title>The full-ORF clone resource of the German cDNA consortium.</title>
        <authorList>
            <person name="Bechtel S."/>
            <person name="Rosenfelder H."/>
            <person name="Duda A."/>
            <person name="Schmidt C.P."/>
            <person name="Ernst U."/>
            <person name="Wellenreuther R."/>
            <person name="Mehrle A."/>
            <person name="Schuster C."/>
            <person name="Bahr A."/>
            <person name="Bloecker H."/>
            <person name="Heubner D."/>
            <person name="Hoerlein A."/>
            <person name="Michel G."/>
            <person name="Wedler H."/>
            <person name="Koehrer K."/>
            <person name="Ottenwaelder B."/>
            <person name="Poustka A."/>
            <person name="Wiemann S."/>
            <person name="Schupp I."/>
        </authorList>
    </citation>
    <scope>NUCLEOTIDE SEQUENCE [LARGE SCALE MRNA]</scope>
    <source>
        <tissue>Testis</tissue>
    </source>
</reference>
<reference key="3">
    <citation type="journal article" date="2004" name="Genome Res.">
        <title>The status, quality, and expansion of the NIH full-length cDNA project: the Mammalian Gene Collection (MGC).</title>
        <authorList>
            <consortium name="The MGC Project Team"/>
        </authorList>
    </citation>
    <scope>NUCLEOTIDE SEQUENCE [LARGE SCALE MRNA]</scope>
    <scope>VARIANT PRO-36</scope>
    <source>
        <tissue>Testis</tissue>
    </source>
</reference>
<comment type="interaction">
    <interactant intactId="EBI-12903902">
        <id>Q8TC99</id>
    </interactant>
    <interactant intactId="EBI-712181">
        <id>Q15013</id>
        <label>MAD2L1BP</label>
    </interactant>
    <organismsDiffer>false</organismsDiffer>
    <experiments>4</experiments>
</comment>
<comment type="interaction">
    <interactant intactId="EBI-12903902">
        <id>Q8TC99</id>
    </interactant>
    <interactant intactId="EBI-348259">
        <id>Q96EZ8</id>
        <label>MCRS1</label>
    </interactant>
    <organismsDiffer>false</organismsDiffer>
    <experiments>3</experiments>
</comment>
<comment type="interaction">
    <interactant intactId="EBI-12903902">
        <id>Q8TC99</id>
    </interactant>
    <interactant intactId="EBI-79893">
        <id>Q92569</id>
        <label>PIK3R3</label>
    </interactant>
    <organismsDiffer>false</organismsDiffer>
    <experiments>3</experiments>
</comment>
<comment type="interaction">
    <interactant intactId="EBI-12903902">
        <id>Q8TC99</id>
    </interactant>
    <interactant intactId="EBI-11735944">
        <id>Q147U7</id>
        <label>SMCO1</label>
    </interactant>
    <organismsDiffer>false</organismsDiffer>
    <experiments>3</experiments>
</comment>
<comment type="interaction">
    <interactant intactId="EBI-12903902">
        <id>Q8TC99</id>
    </interactant>
    <interactant intactId="EBI-7254550">
        <id>P36508</id>
        <label>ZNF76</label>
    </interactant>
    <organismsDiffer>false</organismsDiffer>
    <experiments>3</experiments>
</comment>
<proteinExistence type="evidence at protein level"/>
<keyword id="KW-1267">Proteomics identification</keyword>
<keyword id="KW-1185">Reference proteome</keyword>
<accession>Q8TC99</accession>
<accession>B2R9G6</accession>
<accession>Q9UFC2</accession>
<feature type="chain" id="PRO_0000284530" description="Fibronectin type III domain-containing protein 8">
    <location>
        <begin position="1"/>
        <end position="324"/>
    </location>
</feature>
<feature type="domain" description="Fibronectin type-III" evidence="1">
    <location>
        <begin position="179"/>
        <end position="280"/>
    </location>
</feature>
<feature type="sequence variant" id="VAR_031770" description="In dbSNP:rs1871892." evidence="2">
    <original>S</original>
    <variation>P</variation>
    <location>
        <position position="36"/>
    </location>
</feature>
<feature type="sequence variant" id="VAR_050999" description="In dbSNP:rs12952106.">
    <original>A</original>
    <variation>T</variation>
    <location>
        <position position="127"/>
    </location>
</feature>
<gene>
    <name type="primary">FNDC8</name>
</gene>
<sequence length="324" mass="35921">MASEALHQVGDGEEAVLKKENFNMMNALDQLPKPFSNPKSMNRTVTTKGLPLASKGNLVNFLEDDTINLLKPLPVEDSDCSSDETSISAFSSTLLNPIKLAVTQPNSSFFAGMLEGELNKLSFSPMAKNAENEDLALGPCPCPSKSQMATRGLLDLDNPELETETSSTHSESSVVVDLPDTPFIFEHTVNNSTAVISWTYALGKQPVSFYQLLLQEVAKTQENELPEAKNRPWIFNKILGTTVKLMELKPNTCYCLSVRAANTAGVGKWCKPYKFATLATDFSSFPENYPIQITVRRKEPRQKIVSIGPEEMRRLEDLEYLFPC</sequence>
<protein>
    <recommendedName>
        <fullName>Fibronectin type III domain-containing protein 8</fullName>
    </recommendedName>
</protein>
<name>FNDC8_HUMAN</name>
<evidence type="ECO:0000255" key="1">
    <source>
        <dbReference type="PROSITE-ProRule" id="PRU00316"/>
    </source>
</evidence>
<evidence type="ECO:0000269" key="2">
    <source>
    </source>
</evidence>
<dbReference type="EMBL" id="AK313775">
    <property type="protein sequence ID" value="BAG36513.1"/>
    <property type="molecule type" value="mRNA"/>
</dbReference>
<dbReference type="EMBL" id="AL133054">
    <property type="protein sequence ID" value="CAB61380.1"/>
    <property type="molecule type" value="mRNA"/>
</dbReference>
<dbReference type="EMBL" id="BC024002">
    <property type="protein sequence ID" value="AAH24002.1"/>
    <property type="molecule type" value="mRNA"/>
</dbReference>
<dbReference type="CCDS" id="CCDS11290.1"/>
<dbReference type="PIR" id="T42656">
    <property type="entry name" value="T42656"/>
</dbReference>
<dbReference type="RefSeq" id="NP_060029.1">
    <property type="nucleotide sequence ID" value="NM_017559.4"/>
</dbReference>
<dbReference type="BioGRID" id="120129">
    <property type="interactions" value="17"/>
</dbReference>
<dbReference type="FunCoup" id="Q8TC99">
    <property type="interactions" value="585"/>
</dbReference>
<dbReference type="IntAct" id="Q8TC99">
    <property type="interactions" value="15"/>
</dbReference>
<dbReference type="STRING" id="9606.ENSP00000158009"/>
<dbReference type="GlyGen" id="Q8TC99">
    <property type="glycosylation" value="1 site, 4 N-linked glycans (1 site)"/>
</dbReference>
<dbReference type="iPTMnet" id="Q8TC99"/>
<dbReference type="PhosphoSitePlus" id="Q8TC99"/>
<dbReference type="BioMuta" id="FNDC8"/>
<dbReference type="DMDM" id="145558918"/>
<dbReference type="MassIVE" id="Q8TC99"/>
<dbReference type="PaxDb" id="9606-ENSP00000158009"/>
<dbReference type="PeptideAtlas" id="Q8TC99"/>
<dbReference type="ProteomicsDB" id="74104"/>
<dbReference type="Antibodypedia" id="15564">
    <property type="antibodies" value="177 antibodies from 18 providers"/>
</dbReference>
<dbReference type="DNASU" id="54752"/>
<dbReference type="Ensembl" id="ENST00000158009.6">
    <property type="protein sequence ID" value="ENSP00000158009.4"/>
    <property type="gene ID" value="ENSG00000073598.6"/>
</dbReference>
<dbReference type="GeneID" id="54752"/>
<dbReference type="KEGG" id="hsa:54752"/>
<dbReference type="MANE-Select" id="ENST00000158009.6">
    <property type="protein sequence ID" value="ENSP00000158009.4"/>
    <property type="RefSeq nucleotide sequence ID" value="NM_017559.4"/>
    <property type="RefSeq protein sequence ID" value="NP_060029.1"/>
</dbReference>
<dbReference type="UCSC" id="uc002hix.4">
    <property type="organism name" value="human"/>
</dbReference>
<dbReference type="AGR" id="HGNC:25286"/>
<dbReference type="CTD" id="54752"/>
<dbReference type="DisGeNET" id="54752"/>
<dbReference type="GeneCards" id="FNDC8"/>
<dbReference type="HGNC" id="HGNC:25286">
    <property type="gene designation" value="FNDC8"/>
</dbReference>
<dbReference type="HPA" id="ENSG00000073598">
    <property type="expression patterns" value="Tissue enriched (testis)"/>
</dbReference>
<dbReference type="MalaCards" id="FNDC8"/>
<dbReference type="neXtProt" id="NX_Q8TC99"/>
<dbReference type="OpenTargets" id="ENSG00000073598"/>
<dbReference type="PharmGKB" id="PA142671757"/>
<dbReference type="VEuPathDB" id="HostDB:ENSG00000073598"/>
<dbReference type="eggNOG" id="ENOG502STU7">
    <property type="taxonomic scope" value="Eukaryota"/>
</dbReference>
<dbReference type="GeneTree" id="ENSGT00390000006458"/>
<dbReference type="HOGENOM" id="CLU_075088_0_0_1"/>
<dbReference type="InParanoid" id="Q8TC99"/>
<dbReference type="OMA" id="TYAVGKQ"/>
<dbReference type="OrthoDB" id="9448151at2759"/>
<dbReference type="PAN-GO" id="Q8TC99">
    <property type="GO annotations" value="0 GO annotations based on evolutionary models"/>
</dbReference>
<dbReference type="PhylomeDB" id="Q8TC99"/>
<dbReference type="TreeFam" id="TF338149"/>
<dbReference type="PathwayCommons" id="Q8TC99"/>
<dbReference type="SignaLink" id="Q8TC99"/>
<dbReference type="BioGRID-ORCS" id="54752">
    <property type="hits" value="18 hits in 1141 CRISPR screens"/>
</dbReference>
<dbReference type="GenomeRNAi" id="54752"/>
<dbReference type="Pharos" id="Q8TC99">
    <property type="development level" value="Tdark"/>
</dbReference>
<dbReference type="PRO" id="PR:Q8TC99"/>
<dbReference type="Proteomes" id="UP000005640">
    <property type="component" value="Chromosome 17"/>
</dbReference>
<dbReference type="RNAct" id="Q8TC99">
    <property type="molecule type" value="protein"/>
</dbReference>
<dbReference type="Bgee" id="ENSG00000073598">
    <property type="expression patterns" value="Expressed in left testis and 46 other cell types or tissues"/>
</dbReference>
<dbReference type="GO" id="GO:0005634">
    <property type="term" value="C:nucleus"/>
    <property type="evidence" value="ECO:0007005"/>
    <property type="project" value="UniProtKB"/>
</dbReference>
<dbReference type="CDD" id="cd00063">
    <property type="entry name" value="FN3"/>
    <property type="match status" value="1"/>
</dbReference>
<dbReference type="FunFam" id="2.60.40.10:FF:002100">
    <property type="entry name" value="Fibronectin type III domain containing 8"/>
    <property type="match status" value="1"/>
</dbReference>
<dbReference type="Gene3D" id="2.60.40.10">
    <property type="entry name" value="Immunoglobulins"/>
    <property type="match status" value="1"/>
</dbReference>
<dbReference type="InterPro" id="IPR003961">
    <property type="entry name" value="FN3_dom"/>
</dbReference>
<dbReference type="InterPro" id="IPR036116">
    <property type="entry name" value="FN3_sf"/>
</dbReference>
<dbReference type="InterPro" id="IPR013783">
    <property type="entry name" value="Ig-like_fold"/>
</dbReference>
<dbReference type="PANTHER" id="PTHR32430">
    <property type="entry name" value="FIBRONECTIN TYPE III DOMAIN-CONTAINING PROTEIN 8"/>
    <property type="match status" value="1"/>
</dbReference>
<dbReference type="PANTHER" id="PTHR32430:SF1">
    <property type="entry name" value="FIBRONECTIN TYPE III DOMAIN-CONTAINING PROTEIN 8"/>
    <property type="match status" value="1"/>
</dbReference>
<dbReference type="Pfam" id="PF00041">
    <property type="entry name" value="fn3"/>
    <property type="match status" value="1"/>
</dbReference>
<dbReference type="SMART" id="SM00060">
    <property type="entry name" value="FN3"/>
    <property type="match status" value="1"/>
</dbReference>
<dbReference type="SUPFAM" id="SSF49265">
    <property type="entry name" value="Fibronectin type III"/>
    <property type="match status" value="1"/>
</dbReference>
<dbReference type="PROSITE" id="PS50853">
    <property type="entry name" value="FN3"/>
    <property type="match status" value="1"/>
</dbReference>